<accession>P78033</accession>
<name>G6PI_MYCPN</name>
<organism>
    <name type="scientific">Mycoplasma pneumoniae (strain ATCC 29342 / M129 / Subtype 1)</name>
    <name type="common">Mycoplasmoides pneumoniae</name>
    <dbReference type="NCBI Taxonomy" id="272634"/>
    <lineage>
        <taxon>Bacteria</taxon>
        <taxon>Bacillati</taxon>
        <taxon>Mycoplasmatota</taxon>
        <taxon>Mycoplasmoidales</taxon>
        <taxon>Mycoplasmoidaceae</taxon>
        <taxon>Mycoplasmoides</taxon>
    </lineage>
</organism>
<evidence type="ECO:0000255" key="1">
    <source>
        <dbReference type="HAMAP-Rule" id="MF_00473"/>
    </source>
</evidence>
<evidence type="ECO:0000305" key="2"/>
<proteinExistence type="inferred from homology"/>
<feature type="chain" id="PRO_0000180686" description="Glucose-6-phosphate isomerase">
    <location>
        <begin position="1"/>
        <end position="430"/>
    </location>
</feature>
<feature type="active site" description="Proton donor" evidence="1">
    <location>
        <position position="284"/>
    </location>
</feature>
<feature type="active site" evidence="1">
    <location>
        <position position="305"/>
    </location>
</feature>
<feature type="active site" evidence="1">
    <location>
        <position position="420"/>
    </location>
</feature>
<comment type="function">
    <text evidence="1">Catalyzes the reversible isomerization of glucose-6-phosphate to fructose-6-phosphate.</text>
</comment>
<comment type="catalytic activity">
    <reaction evidence="1">
        <text>alpha-D-glucose 6-phosphate = beta-D-fructose 6-phosphate</text>
        <dbReference type="Rhea" id="RHEA:11816"/>
        <dbReference type="ChEBI" id="CHEBI:57634"/>
        <dbReference type="ChEBI" id="CHEBI:58225"/>
        <dbReference type="EC" id="5.3.1.9"/>
    </reaction>
</comment>
<comment type="pathway">
    <text evidence="1">Carbohydrate biosynthesis; gluconeogenesis.</text>
</comment>
<comment type="pathway">
    <text evidence="1">Carbohydrate degradation; glycolysis; D-glyceraldehyde 3-phosphate and glycerone phosphate from D-glucose: step 2/4.</text>
</comment>
<comment type="subcellular location">
    <subcellularLocation>
        <location evidence="1">Cytoplasm</location>
    </subcellularLocation>
</comment>
<comment type="similarity">
    <text evidence="1 2">Belongs to the GPI family.</text>
</comment>
<gene>
    <name evidence="1" type="primary">pgi</name>
    <name type="ordered locus">MPN_250</name>
    <name type="ORF">MP582</name>
</gene>
<sequence length="430" mass="48834">MESKWLTVDTKHLYGFDEAIFIQKYQKKVNQIHQQFLNQQLPDGHMNGWYSQPDQDHKGLLKQINTIAKQFNALKVTDIVYLGIGGSYTGIRAILDFLKPEQKANIKVHFVPDISAFNIAAVARAIKGKSWALVVTSKSGRTLEPAVTFRYFRNLLHKQYKQKHALRTVVITDAVKGLLVGMSNQYGYAHLTIPSNIGGRFSTLSPAGLLLAKLCGHDPKQLLLGTLTAKQELANSDLNTNSAYYYAALRHWLYTTKKLKIEVTVAYHSAYEYLLLQHRQLFGESEGKGGKSLFPTFSLFTTDLHSMGQLYQEGEKNFFETVIQVQTQFHDLELPPSDFNNDDQLDYLLAKSMNEISNTALEAVVEAHFQSNVNIIKLTLKERTTFMFGYFYFWLSMATMMSGSLLGHNVFDQPGVEVYKQLMFAKLGRE</sequence>
<dbReference type="EC" id="5.3.1.9" evidence="1"/>
<dbReference type="EMBL" id="U00089">
    <property type="protein sequence ID" value="AAB96230.1"/>
    <property type="molecule type" value="Genomic_DNA"/>
</dbReference>
<dbReference type="PIR" id="S73908">
    <property type="entry name" value="S73908"/>
</dbReference>
<dbReference type="RefSeq" id="NP_109938.1">
    <property type="nucleotide sequence ID" value="NC_000912.1"/>
</dbReference>
<dbReference type="RefSeq" id="WP_010874607.1">
    <property type="nucleotide sequence ID" value="NZ_OU342337.1"/>
</dbReference>
<dbReference type="SMR" id="P78033"/>
<dbReference type="STRING" id="272634.MPN_250"/>
<dbReference type="EnsemblBacteria" id="AAB96230">
    <property type="protein sequence ID" value="AAB96230"/>
    <property type="gene ID" value="MPN_250"/>
</dbReference>
<dbReference type="KEGG" id="mpn:MPN_250"/>
<dbReference type="PATRIC" id="fig|272634.6.peg.269"/>
<dbReference type="HOGENOM" id="CLU_037303_0_1_14"/>
<dbReference type="OrthoDB" id="140919at2"/>
<dbReference type="BioCyc" id="MetaCyc:MONOMER-544"/>
<dbReference type="BioCyc" id="MPNE272634:G1GJ3-395-MONOMER"/>
<dbReference type="UniPathway" id="UPA00109">
    <property type="reaction ID" value="UER00181"/>
</dbReference>
<dbReference type="UniPathway" id="UPA00138"/>
<dbReference type="Proteomes" id="UP000000808">
    <property type="component" value="Chromosome"/>
</dbReference>
<dbReference type="GO" id="GO:0005829">
    <property type="term" value="C:cytosol"/>
    <property type="evidence" value="ECO:0007669"/>
    <property type="project" value="TreeGrafter"/>
</dbReference>
<dbReference type="GO" id="GO:0097367">
    <property type="term" value="F:carbohydrate derivative binding"/>
    <property type="evidence" value="ECO:0007669"/>
    <property type="project" value="InterPro"/>
</dbReference>
<dbReference type="GO" id="GO:0004347">
    <property type="term" value="F:glucose-6-phosphate isomerase activity"/>
    <property type="evidence" value="ECO:0007669"/>
    <property type="project" value="UniProtKB-UniRule"/>
</dbReference>
<dbReference type="GO" id="GO:0048029">
    <property type="term" value="F:monosaccharide binding"/>
    <property type="evidence" value="ECO:0007669"/>
    <property type="project" value="TreeGrafter"/>
</dbReference>
<dbReference type="GO" id="GO:0006094">
    <property type="term" value="P:gluconeogenesis"/>
    <property type="evidence" value="ECO:0007669"/>
    <property type="project" value="UniProtKB-UniRule"/>
</dbReference>
<dbReference type="GO" id="GO:0051156">
    <property type="term" value="P:glucose 6-phosphate metabolic process"/>
    <property type="evidence" value="ECO:0007669"/>
    <property type="project" value="TreeGrafter"/>
</dbReference>
<dbReference type="GO" id="GO:0006096">
    <property type="term" value="P:glycolytic process"/>
    <property type="evidence" value="ECO:0007669"/>
    <property type="project" value="UniProtKB-UniRule"/>
</dbReference>
<dbReference type="CDD" id="cd05015">
    <property type="entry name" value="SIS_PGI_1"/>
    <property type="match status" value="1"/>
</dbReference>
<dbReference type="CDD" id="cd05016">
    <property type="entry name" value="SIS_PGI_2"/>
    <property type="match status" value="1"/>
</dbReference>
<dbReference type="FunFam" id="3.40.50.10490:FF:000016">
    <property type="entry name" value="Glucose-6-phosphate isomerase"/>
    <property type="match status" value="1"/>
</dbReference>
<dbReference type="Gene3D" id="3.40.50.10490">
    <property type="entry name" value="Glucose-6-phosphate isomerase like protein, domain 1"/>
    <property type="match status" value="2"/>
</dbReference>
<dbReference type="HAMAP" id="MF_00473">
    <property type="entry name" value="G6P_isomerase"/>
    <property type="match status" value="1"/>
</dbReference>
<dbReference type="InterPro" id="IPR001672">
    <property type="entry name" value="G6P_Isomerase"/>
</dbReference>
<dbReference type="InterPro" id="IPR018189">
    <property type="entry name" value="Phosphoglucose_isomerase_CS"/>
</dbReference>
<dbReference type="InterPro" id="IPR046348">
    <property type="entry name" value="SIS_dom_sf"/>
</dbReference>
<dbReference type="InterPro" id="IPR035476">
    <property type="entry name" value="SIS_PGI_1"/>
</dbReference>
<dbReference type="InterPro" id="IPR035482">
    <property type="entry name" value="SIS_PGI_2"/>
</dbReference>
<dbReference type="NCBIfam" id="NF010697">
    <property type="entry name" value="PRK14097.1"/>
    <property type="match status" value="1"/>
</dbReference>
<dbReference type="PANTHER" id="PTHR11469">
    <property type="entry name" value="GLUCOSE-6-PHOSPHATE ISOMERASE"/>
    <property type="match status" value="1"/>
</dbReference>
<dbReference type="PANTHER" id="PTHR11469:SF1">
    <property type="entry name" value="GLUCOSE-6-PHOSPHATE ISOMERASE"/>
    <property type="match status" value="1"/>
</dbReference>
<dbReference type="Pfam" id="PF00342">
    <property type="entry name" value="PGI"/>
    <property type="match status" value="1"/>
</dbReference>
<dbReference type="PRINTS" id="PR00662">
    <property type="entry name" value="G6PISOMERASE"/>
</dbReference>
<dbReference type="SUPFAM" id="SSF53697">
    <property type="entry name" value="SIS domain"/>
    <property type="match status" value="1"/>
</dbReference>
<dbReference type="PROSITE" id="PS00765">
    <property type="entry name" value="P_GLUCOSE_ISOMERASE_1"/>
    <property type="match status" value="1"/>
</dbReference>
<dbReference type="PROSITE" id="PS00174">
    <property type="entry name" value="P_GLUCOSE_ISOMERASE_2"/>
    <property type="match status" value="1"/>
</dbReference>
<dbReference type="PROSITE" id="PS51463">
    <property type="entry name" value="P_GLUCOSE_ISOMERASE_3"/>
    <property type="match status" value="1"/>
</dbReference>
<reference key="1">
    <citation type="journal article" date="1996" name="Nucleic Acids Res.">
        <title>Complete sequence analysis of the genome of the bacterium Mycoplasma pneumoniae.</title>
        <authorList>
            <person name="Himmelreich R."/>
            <person name="Hilbert H."/>
            <person name="Plagens H."/>
            <person name="Pirkl E."/>
            <person name="Li B.-C."/>
            <person name="Herrmann R."/>
        </authorList>
    </citation>
    <scope>NUCLEOTIDE SEQUENCE [LARGE SCALE GENOMIC DNA]</scope>
    <source>
        <strain>ATCC 29342 / M129 / Subtype 1</strain>
    </source>
</reference>
<keyword id="KW-0963">Cytoplasm</keyword>
<keyword id="KW-0312">Gluconeogenesis</keyword>
<keyword id="KW-0324">Glycolysis</keyword>
<keyword id="KW-0413">Isomerase</keyword>
<keyword id="KW-1185">Reference proteome</keyword>
<protein>
    <recommendedName>
        <fullName evidence="1">Glucose-6-phosphate isomerase</fullName>
        <shortName evidence="1">GPI</shortName>
        <ecNumber evidence="1">5.3.1.9</ecNumber>
    </recommendedName>
    <alternativeName>
        <fullName evidence="1">Phosphoglucose isomerase</fullName>
        <shortName evidence="1">PGI</shortName>
    </alternativeName>
    <alternativeName>
        <fullName evidence="1">Phosphohexose isomerase</fullName>
        <shortName evidence="1">PHI</shortName>
    </alternativeName>
</protein>